<feature type="chain" id="PRO_0000352374" description="Inosose dehydratase">
    <location>
        <begin position="1"/>
        <end position="300"/>
    </location>
</feature>
<feature type="helix" evidence="2">
    <location>
        <begin position="3"/>
        <end position="7"/>
    </location>
</feature>
<feature type="strand" evidence="2">
    <location>
        <begin position="9"/>
        <end position="13"/>
    </location>
</feature>
<feature type="helix" evidence="2">
    <location>
        <begin position="15"/>
        <end position="17"/>
    </location>
</feature>
<feature type="strand" evidence="2">
    <location>
        <begin position="21"/>
        <end position="23"/>
    </location>
</feature>
<feature type="turn" evidence="2">
    <location>
        <begin position="24"/>
        <end position="29"/>
    </location>
</feature>
<feature type="helix" evidence="2">
    <location>
        <begin position="32"/>
        <end position="42"/>
    </location>
</feature>
<feature type="helix" evidence="2">
    <location>
        <begin position="56"/>
        <end position="65"/>
    </location>
</feature>
<feature type="strand" evidence="2">
    <location>
        <begin position="72"/>
        <end position="77"/>
    </location>
</feature>
<feature type="helix" evidence="2">
    <location>
        <begin position="79"/>
        <end position="100"/>
    </location>
</feature>
<feature type="strand" evidence="2">
    <location>
        <begin position="105"/>
        <end position="110"/>
    </location>
</feature>
<feature type="turn" evidence="2">
    <location>
        <begin position="123"/>
        <end position="125"/>
    </location>
</feature>
<feature type="helix" evidence="2">
    <location>
        <begin position="132"/>
        <end position="151"/>
    </location>
</feature>
<feature type="strand" evidence="2">
    <location>
        <begin position="155"/>
        <end position="159"/>
    </location>
</feature>
<feature type="strand" evidence="2">
    <location>
        <begin position="164"/>
        <end position="166"/>
    </location>
</feature>
<feature type="helix" evidence="2">
    <location>
        <begin position="169"/>
        <end position="177"/>
    </location>
</feature>
<feature type="turn" evidence="2">
    <location>
        <begin position="181"/>
        <end position="183"/>
    </location>
</feature>
<feature type="strand" evidence="2">
    <location>
        <begin position="185"/>
        <end position="189"/>
    </location>
</feature>
<feature type="helix" evidence="2">
    <location>
        <begin position="190"/>
        <end position="197"/>
    </location>
</feature>
<feature type="helix" evidence="2">
    <location>
        <begin position="201"/>
        <end position="207"/>
    </location>
</feature>
<feature type="helix" evidence="2">
    <location>
        <begin position="208"/>
        <end position="210"/>
    </location>
</feature>
<feature type="strand" evidence="2">
    <location>
        <begin position="211"/>
        <end position="216"/>
    </location>
</feature>
<feature type="helix" evidence="2">
    <location>
        <begin position="221"/>
        <end position="230"/>
    </location>
</feature>
<feature type="helix" evidence="2">
    <location>
        <begin position="234"/>
        <end position="239"/>
    </location>
</feature>
<feature type="turn" evidence="2">
    <location>
        <begin position="246"/>
        <end position="248"/>
    </location>
</feature>
<feature type="helix" evidence="2">
    <location>
        <begin position="254"/>
        <end position="262"/>
    </location>
</feature>
<feature type="strand" evidence="2">
    <location>
        <begin position="267"/>
        <end position="271"/>
    </location>
</feature>
<feature type="turn" evidence="2">
    <location>
        <begin position="277"/>
        <end position="279"/>
    </location>
</feature>
<feature type="helix" evidence="2">
    <location>
        <begin position="282"/>
        <end position="296"/>
    </location>
</feature>
<gene>
    <name evidence="1" type="primary">iolE</name>
    <name type="ordered locus">lp_3607</name>
</gene>
<comment type="function">
    <text evidence="1">Catalyzes the dehydration of inosose (2-keto-myo-inositol, 2KMI or 2,4,6/3,5-pentahydroxycyclohexanone) to 3D-(3,5/4)-trihydroxycyclohexane-1,2-dione (D-2,3-diketo-4-deoxy-epi-inositol).</text>
</comment>
<comment type="catalytic activity">
    <reaction evidence="1">
        <text>scyllo-inosose = 3D-3,5/4-trihydroxycyclohexane-1,2-dione + H2O</text>
        <dbReference type="Rhea" id="RHEA:14065"/>
        <dbReference type="ChEBI" id="CHEBI:15377"/>
        <dbReference type="ChEBI" id="CHEBI:17811"/>
        <dbReference type="ChEBI" id="CHEBI:28446"/>
        <dbReference type="EC" id="4.2.1.44"/>
    </reaction>
</comment>
<comment type="cofactor">
    <cofactor evidence="1">
        <name>glutathione</name>
        <dbReference type="ChEBI" id="CHEBI:57925"/>
    </cofactor>
</comment>
<comment type="cofactor">
    <cofactor evidence="1">
        <name>Co(2+)</name>
        <dbReference type="ChEBI" id="CHEBI:48828"/>
    </cofactor>
    <cofactor evidence="1">
        <name>Mn(2+)</name>
        <dbReference type="ChEBI" id="CHEBI:29035"/>
    </cofactor>
</comment>
<comment type="pathway">
    <text evidence="1">Polyol metabolism; myo-inositol degradation into acetyl-CoA; acetyl-CoA from myo-inositol: step 2/7.</text>
</comment>
<comment type="similarity">
    <text evidence="1">Belongs to the IolE/MocC family.</text>
</comment>
<keyword id="KW-0002">3D-structure</keyword>
<keyword id="KW-0170">Cobalt</keyword>
<keyword id="KW-0456">Lyase</keyword>
<keyword id="KW-0464">Manganese</keyword>
<keyword id="KW-1185">Reference proteome</keyword>
<reference key="1">
    <citation type="journal article" date="2003" name="Proc. Natl. Acad. Sci. U.S.A.">
        <title>Complete genome sequence of Lactobacillus plantarum WCFS1.</title>
        <authorList>
            <person name="Kleerebezem M."/>
            <person name="Boekhorst J."/>
            <person name="van Kranenburg R."/>
            <person name="Molenaar D."/>
            <person name="Kuipers O.P."/>
            <person name="Leer R."/>
            <person name="Tarchini R."/>
            <person name="Peters S.A."/>
            <person name="Sandbrink H.M."/>
            <person name="Fiers M.W.E.J."/>
            <person name="Stiekema W."/>
            <person name="Klein Lankhorst R.M."/>
            <person name="Bron P.A."/>
            <person name="Hoffer S.M."/>
            <person name="Nierop Groot M.N."/>
            <person name="Kerkhoven R."/>
            <person name="De Vries M."/>
            <person name="Ursing B."/>
            <person name="De Vos W.M."/>
            <person name="Siezen R.J."/>
        </authorList>
    </citation>
    <scope>NUCLEOTIDE SEQUENCE [LARGE SCALE GENOMIC DNA]</scope>
    <source>
        <strain>ATCC BAA-793 / NCIMB 8826 / WCFS1</strain>
    </source>
</reference>
<reference key="2">
    <citation type="journal article" date="2012" name="J. Bacteriol.">
        <title>Complete resequencing and reannotation of the Lactobacillus plantarum WCFS1 genome.</title>
        <authorList>
            <person name="Siezen R.J."/>
            <person name="Francke C."/>
            <person name="Renckens B."/>
            <person name="Boekhorst J."/>
            <person name="Wels M."/>
            <person name="Kleerebezem M."/>
            <person name="van Hijum S.A."/>
        </authorList>
    </citation>
    <scope>NUCLEOTIDE SEQUENCE [LARGE SCALE GENOMIC DNA]</scope>
    <scope>GENOME REANNOTATION</scope>
    <source>
        <strain>ATCC BAA-793 / NCIMB 8826 / WCFS1</strain>
    </source>
</reference>
<proteinExistence type="evidence at protein level"/>
<dbReference type="EC" id="4.2.1.44" evidence="1"/>
<dbReference type="EMBL" id="AL935263">
    <property type="protein sequence ID" value="CCC80568.1"/>
    <property type="molecule type" value="Genomic_DNA"/>
</dbReference>
<dbReference type="RefSeq" id="WP_011102249.1">
    <property type="nucleotide sequence ID" value="NC_004567.2"/>
</dbReference>
<dbReference type="RefSeq" id="YP_004891082.1">
    <property type="nucleotide sequence ID" value="NC_004567.2"/>
</dbReference>
<dbReference type="PDB" id="3CNY">
    <property type="method" value="X-ray"/>
    <property type="resolution" value="1.85 A"/>
    <property type="chains" value="A/B=1-300"/>
</dbReference>
<dbReference type="PDBsum" id="3CNY"/>
<dbReference type="SMR" id="Q88S37"/>
<dbReference type="STRING" id="220668.lp_3607"/>
<dbReference type="EnsemblBacteria" id="CCC80568">
    <property type="protein sequence ID" value="CCC80568"/>
    <property type="gene ID" value="lp_3607"/>
</dbReference>
<dbReference type="KEGG" id="lpl:lp_3607"/>
<dbReference type="PATRIC" id="fig|220668.9.peg.3011"/>
<dbReference type="eggNOG" id="COG1082">
    <property type="taxonomic scope" value="Bacteria"/>
</dbReference>
<dbReference type="HOGENOM" id="CLU_059523_0_0_9"/>
<dbReference type="OrthoDB" id="9779184at2"/>
<dbReference type="PhylomeDB" id="Q88S37"/>
<dbReference type="UniPathway" id="UPA00076">
    <property type="reaction ID" value="UER00144"/>
</dbReference>
<dbReference type="EvolutionaryTrace" id="Q88S37"/>
<dbReference type="Proteomes" id="UP000000432">
    <property type="component" value="Chromosome"/>
</dbReference>
<dbReference type="GO" id="GO:0030145">
    <property type="term" value="F:manganese ion binding"/>
    <property type="evidence" value="ECO:0007669"/>
    <property type="project" value="UniProtKB-UniRule"/>
</dbReference>
<dbReference type="GO" id="GO:0050114">
    <property type="term" value="F:myo-inosose-2 dehydratase activity"/>
    <property type="evidence" value="ECO:0007669"/>
    <property type="project" value="UniProtKB-UniRule"/>
</dbReference>
<dbReference type="GO" id="GO:0019310">
    <property type="term" value="P:inositol catabolic process"/>
    <property type="evidence" value="ECO:0007669"/>
    <property type="project" value="UniProtKB-UniRule"/>
</dbReference>
<dbReference type="Gene3D" id="3.20.20.150">
    <property type="entry name" value="Divalent-metal-dependent TIM barrel enzymes"/>
    <property type="match status" value="1"/>
</dbReference>
<dbReference type="HAMAP" id="MF_01672">
    <property type="entry name" value="IolE"/>
    <property type="match status" value="1"/>
</dbReference>
<dbReference type="InterPro" id="IPR023952">
    <property type="entry name" value="IolE"/>
</dbReference>
<dbReference type="InterPro" id="IPR030823">
    <property type="entry name" value="IolE/MocC"/>
</dbReference>
<dbReference type="InterPro" id="IPR050312">
    <property type="entry name" value="IolE/XylAMocC-like"/>
</dbReference>
<dbReference type="InterPro" id="IPR036237">
    <property type="entry name" value="Xyl_isomerase-like_sf"/>
</dbReference>
<dbReference type="InterPro" id="IPR013022">
    <property type="entry name" value="Xyl_isomerase-like_TIM-brl"/>
</dbReference>
<dbReference type="NCBIfam" id="TIGR04379">
    <property type="entry name" value="myo_inos_iolE"/>
    <property type="match status" value="1"/>
</dbReference>
<dbReference type="PANTHER" id="PTHR12110">
    <property type="entry name" value="HYDROXYPYRUVATE ISOMERASE"/>
    <property type="match status" value="1"/>
</dbReference>
<dbReference type="PANTHER" id="PTHR12110:SF41">
    <property type="entry name" value="INOSOSE DEHYDRATASE"/>
    <property type="match status" value="1"/>
</dbReference>
<dbReference type="Pfam" id="PF01261">
    <property type="entry name" value="AP_endonuc_2"/>
    <property type="match status" value="1"/>
</dbReference>
<dbReference type="SUPFAM" id="SSF51658">
    <property type="entry name" value="Xylose isomerase-like"/>
    <property type="match status" value="1"/>
</dbReference>
<organism>
    <name type="scientific">Lactiplantibacillus plantarum (strain ATCC BAA-793 / NCIMB 8826 / WCFS1)</name>
    <name type="common">Lactobacillus plantarum</name>
    <dbReference type="NCBI Taxonomy" id="220668"/>
    <lineage>
        <taxon>Bacteria</taxon>
        <taxon>Bacillati</taxon>
        <taxon>Bacillota</taxon>
        <taxon>Bacilli</taxon>
        <taxon>Lactobacillales</taxon>
        <taxon>Lactobacillaceae</taxon>
        <taxon>Lactiplantibacillus</taxon>
    </lineage>
</organism>
<accession>Q88S37</accession>
<accession>F9ULG1</accession>
<sequence length="300" mass="33881">MSSKAEKDIKWGIAPIGWRNDDIPSIGKDNNLQQLLSDIVVAGFQGTEVGGFFPGPEKLNYELKLRNLEIAGQWFSSYIIRDGIEKASEAFEKHCQYLKAINAPVAVVSEQTYTIQRSDTANIFKDKPYFTDKEWDEVCKGLNHYGEIAAKYGLKVAYHHHMGTGIQTKEETDRLMANTDPKLVGLLYDTGHIAVSDGDYMALLNAHIDRVVHVHFKDVRRSKEEECRAKGLTFQGSFLNGMFTVPGDGDLDFKPVYDKLIANNYKGWIVVEAEQDPSKANPLEMAQIAHRYIKQHLIEN</sequence>
<evidence type="ECO:0000255" key="1">
    <source>
        <dbReference type="HAMAP-Rule" id="MF_01672"/>
    </source>
</evidence>
<evidence type="ECO:0007829" key="2">
    <source>
        <dbReference type="PDB" id="3CNY"/>
    </source>
</evidence>
<protein>
    <recommendedName>
        <fullName evidence="1">Inosose dehydratase</fullName>
        <ecNumber evidence="1">4.2.1.44</ecNumber>
    </recommendedName>
    <alternativeName>
        <fullName evidence="1">2-keto-myo-inositol dehydratase</fullName>
        <shortName evidence="1">2KMI dehydratase</shortName>
    </alternativeName>
</protein>
<name>IOLE_LACPL</name>